<accession>Q0TMI0</accession>
<organism>
    <name type="scientific">Clostridium perfringens (strain ATCC 13124 / DSM 756 / JCM 1290 / NCIMB 6125 / NCTC 8237 / Type A)</name>
    <dbReference type="NCBI Taxonomy" id="195103"/>
    <lineage>
        <taxon>Bacteria</taxon>
        <taxon>Bacillati</taxon>
        <taxon>Bacillota</taxon>
        <taxon>Clostridia</taxon>
        <taxon>Eubacteriales</taxon>
        <taxon>Clostridiaceae</taxon>
        <taxon>Clostridium</taxon>
    </lineage>
</organism>
<sequence length="469" mass="54180">MKKKVIDFIKENSMIKNGDKVLVALSGGPDSVCLLHILSELRELLHIEVYAAHVNHCLRGESALKDEAYVEELCKNLNIKCFVKRVDINKISEEQNISTEMAGREERYKFFEELKNEYSLDKIAIAHNANDQAETLIMRALRGTGIEGLVGIKPVRDGIFIRPILILRRKEIEEYCEINNLNPRIDETNLEEIYSRNKIRLKAIPFIEENFNPDIVATLNRLAYSCSKDVEFIQEEVEKRFPKLCIKENHSILIKEEAFNEKEALLTRIIKKALFEVSSKHNNFELKHIQDIIALKDKGTGKQINITNGVIALNEYGDIRIKLVDSKKAKENKVLNLENIKDELDKNQKVVIEDDILGNYELIVEDLKKGEKFSKDRFIKSFDYDKISNIDIRFRQNGDKIIPLGMKSSKKLKDIFINNKIPKEERDFIPLVLFNNEIAWIVGSNVSETFKVTNKTKKVIKITFKGKEN</sequence>
<feature type="chain" id="PRO_1000065608" description="tRNA(Ile)-lysidine synthase">
    <location>
        <begin position="1"/>
        <end position="469"/>
    </location>
</feature>
<feature type="binding site" evidence="1">
    <location>
        <begin position="26"/>
        <end position="31"/>
    </location>
    <ligand>
        <name>ATP</name>
        <dbReference type="ChEBI" id="CHEBI:30616"/>
    </ligand>
</feature>
<protein>
    <recommendedName>
        <fullName evidence="1">tRNA(Ile)-lysidine synthase</fullName>
        <ecNumber evidence="1">6.3.4.19</ecNumber>
    </recommendedName>
    <alternativeName>
        <fullName evidence="1">tRNA(Ile)-2-lysyl-cytidine synthase</fullName>
    </alternativeName>
    <alternativeName>
        <fullName evidence="1">tRNA(Ile)-lysidine synthetase</fullName>
    </alternativeName>
</protein>
<proteinExistence type="inferred from homology"/>
<comment type="function">
    <text evidence="1">Ligates lysine onto the cytidine present at position 34 of the AUA codon-specific tRNA(Ile) that contains the anticodon CAU, in an ATP-dependent manner. Cytidine is converted to lysidine, thus changing the amino acid specificity of the tRNA from methionine to isoleucine.</text>
</comment>
<comment type="catalytic activity">
    <reaction evidence="1">
        <text>cytidine(34) in tRNA(Ile2) + L-lysine + ATP = lysidine(34) in tRNA(Ile2) + AMP + diphosphate + H(+)</text>
        <dbReference type="Rhea" id="RHEA:43744"/>
        <dbReference type="Rhea" id="RHEA-COMP:10625"/>
        <dbReference type="Rhea" id="RHEA-COMP:10670"/>
        <dbReference type="ChEBI" id="CHEBI:15378"/>
        <dbReference type="ChEBI" id="CHEBI:30616"/>
        <dbReference type="ChEBI" id="CHEBI:32551"/>
        <dbReference type="ChEBI" id="CHEBI:33019"/>
        <dbReference type="ChEBI" id="CHEBI:82748"/>
        <dbReference type="ChEBI" id="CHEBI:83665"/>
        <dbReference type="ChEBI" id="CHEBI:456215"/>
        <dbReference type="EC" id="6.3.4.19"/>
    </reaction>
</comment>
<comment type="subcellular location">
    <subcellularLocation>
        <location evidence="1">Cytoplasm</location>
    </subcellularLocation>
</comment>
<comment type="domain">
    <text>The N-terminal region contains the highly conserved SGGXDS motif, predicted to be a P-loop motif involved in ATP binding.</text>
</comment>
<comment type="similarity">
    <text evidence="1">Belongs to the tRNA(Ile)-lysidine synthase family.</text>
</comment>
<gene>
    <name evidence="1" type="primary">tilS</name>
    <name type="ordered locus">CPF_2788</name>
</gene>
<dbReference type="EC" id="6.3.4.19" evidence="1"/>
<dbReference type="EMBL" id="CP000246">
    <property type="protein sequence ID" value="ABG82412.2"/>
    <property type="molecule type" value="Genomic_DNA"/>
</dbReference>
<dbReference type="RefSeq" id="WP_003479285.1">
    <property type="nucleotide sequence ID" value="NC_008261.1"/>
</dbReference>
<dbReference type="SMR" id="Q0TMI0"/>
<dbReference type="STRING" id="195103.CPF_2788"/>
<dbReference type="PaxDb" id="195103-CPF_2788"/>
<dbReference type="KEGG" id="cpf:CPF_2788"/>
<dbReference type="eggNOG" id="COG0037">
    <property type="taxonomic scope" value="Bacteria"/>
</dbReference>
<dbReference type="HOGENOM" id="CLU_018869_0_1_9"/>
<dbReference type="Proteomes" id="UP000001823">
    <property type="component" value="Chromosome"/>
</dbReference>
<dbReference type="GO" id="GO:0005737">
    <property type="term" value="C:cytoplasm"/>
    <property type="evidence" value="ECO:0007669"/>
    <property type="project" value="UniProtKB-SubCell"/>
</dbReference>
<dbReference type="GO" id="GO:0005524">
    <property type="term" value="F:ATP binding"/>
    <property type="evidence" value="ECO:0007669"/>
    <property type="project" value="UniProtKB-UniRule"/>
</dbReference>
<dbReference type="GO" id="GO:0032267">
    <property type="term" value="F:tRNA(Ile)-lysidine synthase activity"/>
    <property type="evidence" value="ECO:0007669"/>
    <property type="project" value="UniProtKB-EC"/>
</dbReference>
<dbReference type="GO" id="GO:0006400">
    <property type="term" value="P:tRNA modification"/>
    <property type="evidence" value="ECO:0007669"/>
    <property type="project" value="UniProtKB-UniRule"/>
</dbReference>
<dbReference type="CDD" id="cd01992">
    <property type="entry name" value="TilS_N"/>
    <property type="match status" value="1"/>
</dbReference>
<dbReference type="Gene3D" id="1.20.59.20">
    <property type="match status" value="1"/>
</dbReference>
<dbReference type="Gene3D" id="3.40.50.620">
    <property type="entry name" value="HUPs"/>
    <property type="match status" value="1"/>
</dbReference>
<dbReference type="HAMAP" id="MF_01161">
    <property type="entry name" value="tRNA_Ile_lys_synt"/>
    <property type="match status" value="1"/>
</dbReference>
<dbReference type="InterPro" id="IPR012796">
    <property type="entry name" value="Lysidine-tRNA-synth_C"/>
</dbReference>
<dbReference type="InterPro" id="IPR014729">
    <property type="entry name" value="Rossmann-like_a/b/a_fold"/>
</dbReference>
<dbReference type="InterPro" id="IPR011063">
    <property type="entry name" value="TilS/TtcA_N"/>
</dbReference>
<dbReference type="InterPro" id="IPR012094">
    <property type="entry name" value="tRNA_Ile_lys_synt"/>
</dbReference>
<dbReference type="InterPro" id="IPR012795">
    <property type="entry name" value="tRNA_Ile_lys_synt_N"/>
</dbReference>
<dbReference type="NCBIfam" id="TIGR02433">
    <property type="entry name" value="lysidine_TilS_C"/>
    <property type="match status" value="1"/>
</dbReference>
<dbReference type="NCBIfam" id="TIGR02432">
    <property type="entry name" value="lysidine_TilS_N"/>
    <property type="match status" value="1"/>
</dbReference>
<dbReference type="PANTHER" id="PTHR43033">
    <property type="entry name" value="TRNA(ILE)-LYSIDINE SYNTHASE-RELATED"/>
    <property type="match status" value="1"/>
</dbReference>
<dbReference type="PANTHER" id="PTHR43033:SF1">
    <property type="entry name" value="TRNA(ILE)-LYSIDINE SYNTHASE-RELATED"/>
    <property type="match status" value="1"/>
</dbReference>
<dbReference type="Pfam" id="PF01171">
    <property type="entry name" value="ATP_bind_3"/>
    <property type="match status" value="1"/>
</dbReference>
<dbReference type="Pfam" id="PF11734">
    <property type="entry name" value="TilS_C"/>
    <property type="match status" value="1"/>
</dbReference>
<dbReference type="SMART" id="SM00977">
    <property type="entry name" value="TilS_C"/>
    <property type="match status" value="1"/>
</dbReference>
<dbReference type="SUPFAM" id="SSF52402">
    <property type="entry name" value="Adenine nucleotide alpha hydrolases-like"/>
    <property type="match status" value="1"/>
</dbReference>
<dbReference type="SUPFAM" id="SSF82829">
    <property type="entry name" value="MesJ substrate recognition domain-like"/>
    <property type="match status" value="1"/>
</dbReference>
<dbReference type="SUPFAM" id="SSF56037">
    <property type="entry name" value="PheT/TilS domain"/>
    <property type="match status" value="1"/>
</dbReference>
<reference key="1">
    <citation type="journal article" date="2006" name="Genome Res.">
        <title>Skewed genomic variability in strains of the toxigenic bacterial pathogen, Clostridium perfringens.</title>
        <authorList>
            <person name="Myers G.S.A."/>
            <person name="Rasko D.A."/>
            <person name="Cheung J.K."/>
            <person name="Ravel J."/>
            <person name="Seshadri R."/>
            <person name="DeBoy R.T."/>
            <person name="Ren Q."/>
            <person name="Varga J."/>
            <person name="Awad M.M."/>
            <person name="Brinkac L.M."/>
            <person name="Daugherty S.C."/>
            <person name="Haft D.H."/>
            <person name="Dodson R.J."/>
            <person name="Madupu R."/>
            <person name="Nelson W.C."/>
            <person name="Rosovitz M.J."/>
            <person name="Sullivan S.A."/>
            <person name="Khouri H."/>
            <person name="Dimitrov G.I."/>
            <person name="Watkins K.L."/>
            <person name="Mulligan S."/>
            <person name="Benton J."/>
            <person name="Radune D."/>
            <person name="Fisher D.J."/>
            <person name="Atkins H.S."/>
            <person name="Hiscox T."/>
            <person name="Jost B.H."/>
            <person name="Billington S.J."/>
            <person name="Songer J.G."/>
            <person name="McClane B.A."/>
            <person name="Titball R.W."/>
            <person name="Rood J.I."/>
            <person name="Melville S.B."/>
            <person name="Paulsen I.T."/>
        </authorList>
    </citation>
    <scope>NUCLEOTIDE SEQUENCE [LARGE SCALE GENOMIC DNA]</scope>
    <source>
        <strain>ATCC 13124 / DSM 756 / JCM 1290 / NCIMB 6125 / NCTC 8237 / S 107 / Type A</strain>
    </source>
</reference>
<keyword id="KW-0067">ATP-binding</keyword>
<keyword id="KW-0963">Cytoplasm</keyword>
<keyword id="KW-0436">Ligase</keyword>
<keyword id="KW-0547">Nucleotide-binding</keyword>
<keyword id="KW-0819">tRNA processing</keyword>
<evidence type="ECO:0000255" key="1">
    <source>
        <dbReference type="HAMAP-Rule" id="MF_01161"/>
    </source>
</evidence>
<name>TILS_CLOP1</name>